<name>Y681_MYCPU</name>
<organism>
    <name type="scientific">Mycoplasmopsis pulmonis (strain UAB CTIP)</name>
    <name type="common">Mycoplasma pulmonis</name>
    <dbReference type="NCBI Taxonomy" id="272635"/>
    <lineage>
        <taxon>Bacteria</taxon>
        <taxon>Bacillati</taxon>
        <taxon>Mycoplasmatota</taxon>
        <taxon>Mycoplasmoidales</taxon>
        <taxon>Metamycoplasmataceae</taxon>
        <taxon>Mycoplasmopsis</taxon>
    </lineage>
</organism>
<protein>
    <recommendedName>
        <fullName>Uncharacterized protein MYPU_6810</fullName>
    </recommendedName>
</protein>
<reference key="1">
    <citation type="journal article" date="1994" name="Mol. Microbiol.">
        <title>Regulation of a restriction and modification system via DNA inversion in Mycoplasma pulmonis.</title>
        <authorList>
            <person name="Dybvig K."/>
            <person name="Yu H."/>
        </authorList>
    </citation>
    <scope>NUCLEOTIDE SEQUENCE [GENOMIC DNA]</scope>
    <source>
        <strain>KD735-16</strain>
    </source>
</reference>
<reference key="2">
    <citation type="journal article" date="2001" name="Nucleic Acids Res.">
        <title>The complete genome sequence of the murine respiratory pathogen Mycoplasma pulmonis.</title>
        <authorList>
            <person name="Chambaud I."/>
            <person name="Heilig R."/>
            <person name="Ferris S."/>
            <person name="Barbe V."/>
            <person name="Samson D."/>
            <person name="Galisson F."/>
            <person name="Moszer I."/>
            <person name="Dybvig K."/>
            <person name="Wroblewski H."/>
            <person name="Viari A."/>
            <person name="Rocha E.P.C."/>
            <person name="Blanchard A."/>
        </authorList>
    </citation>
    <scope>NUCLEOTIDE SEQUENCE [LARGE SCALE GENOMIC DNA]</scope>
    <source>
        <strain>UAB CTIP</strain>
    </source>
</reference>
<proteinExistence type="predicted"/>
<feature type="chain" id="PRO_0000210727" description="Uncharacterized protein MYPU_6810">
    <location>
        <begin position="1"/>
        <end position="126"/>
    </location>
</feature>
<sequence>MKIEFNSEFTQEGQEKNINFVSPVEISEYEGATVYEFSEPSKEHLSRIEINSNSNEVLIITDSMTMILKLNEEVENAIALGQGKFFLKSLLNKLEHNDSESFFAYVLKDTSGNELACFKITLKIFE</sequence>
<accession>Q50355</accession>
<dbReference type="EMBL" id="L25415">
    <property type="protein sequence ID" value="AAA65630.1"/>
    <property type="molecule type" value="Genomic_DNA"/>
</dbReference>
<dbReference type="EMBL" id="AL445565">
    <property type="protein sequence ID" value="CAC13854.1"/>
    <property type="molecule type" value="Genomic_DNA"/>
</dbReference>
<dbReference type="PIR" id="S49392">
    <property type="entry name" value="S49392"/>
</dbReference>
<dbReference type="RefSeq" id="WP_010925482.1">
    <property type="nucleotide sequence ID" value="NC_002771.1"/>
</dbReference>
<dbReference type="SMR" id="Q50355"/>
<dbReference type="STRING" id="272635.gene:17577292"/>
<dbReference type="KEGG" id="mpu:MYPU_6810"/>
<dbReference type="HOGENOM" id="CLU_1979086_0_0_14"/>
<dbReference type="BioCyc" id="MPUL272635:G1GT6-695-MONOMER"/>
<dbReference type="Proteomes" id="UP000000528">
    <property type="component" value="Chromosome"/>
</dbReference>
<dbReference type="InterPro" id="IPR012674">
    <property type="entry name" value="Calycin"/>
</dbReference>
<dbReference type="SUPFAM" id="SSF50814">
    <property type="entry name" value="Lipocalins"/>
    <property type="match status" value="1"/>
</dbReference>
<gene>
    <name type="ordered locus">MYPU_6810</name>
</gene>
<keyword id="KW-1185">Reference proteome</keyword>